<comment type="function">
    <text>Extracellular aminopeptidase that releases a wide variety of amino acids from natural peptides and contributes to pathogenicity.</text>
</comment>
<comment type="cofactor">
    <cofactor evidence="2">
        <name>Zn(2+)</name>
        <dbReference type="ChEBI" id="CHEBI:29105"/>
    </cofactor>
    <text evidence="2">Binds 2 Zn(2+) ions per subunit.</text>
</comment>
<comment type="subunit">
    <text evidence="1">Monomer.</text>
</comment>
<comment type="subcellular location">
    <subcellularLocation>
        <location evidence="1">Secreted</location>
    </subcellularLocation>
</comment>
<comment type="similarity">
    <text evidence="5">Belongs to the peptidase M28 family. M28A subfamily.</text>
</comment>
<accession>C5FTZ6</accession>
<gene>
    <name type="primary">LAP2</name>
    <name type="ORF">MCYG_06199</name>
</gene>
<organism>
    <name type="scientific">Arthroderma otae (strain ATCC MYA-4605 / CBS 113480)</name>
    <name type="common">Microsporum canis</name>
    <dbReference type="NCBI Taxonomy" id="554155"/>
    <lineage>
        <taxon>Eukaryota</taxon>
        <taxon>Fungi</taxon>
        <taxon>Dikarya</taxon>
        <taxon>Ascomycota</taxon>
        <taxon>Pezizomycotina</taxon>
        <taxon>Eurotiomycetes</taxon>
        <taxon>Eurotiomycetidae</taxon>
        <taxon>Onygenales</taxon>
        <taxon>Arthrodermataceae</taxon>
        <taxon>Microsporum</taxon>
    </lineage>
</organism>
<proteinExistence type="inferred from homology"/>
<evidence type="ECO:0000250" key="1"/>
<evidence type="ECO:0000250" key="2">
    <source>
        <dbReference type="UniProtKB" id="P80561"/>
    </source>
</evidence>
<evidence type="ECO:0000255" key="3"/>
<evidence type="ECO:0000256" key="4">
    <source>
        <dbReference type="SAM" id="MobiDB-lite"/>
    </source>
</evidence>
<evidence type="ECO:0000305" key="5"/>
<dbReference type="EC" id="3.4.11.-"/>
<dbReference type="EMBL" id="DS995706">
    <property type="protein sequence ID" value="EEQ33380.1"/>
    <property type="molecule type" value="Genomic_DNA"/>
</dbReference>
<dbReference type="RefSeq" id="XP_002844235.1">
    <property type="nucleotide sequence ID" value="XM_002844189.1"/>
</dbReference>
<dbReference type="SMR" id="C5FTZ6"/>
<dbReference type="STRING" id="554155.C5FTZ6"/>
<dbReference type="GlyCosmos" id="C5FTZ6">
    <property type="glycosylation" value="4 sites, No reported glycans"/>
</dbReference>
<dbReference type="GeneID" id="9222474"/>
<dbReference type="VEuPathDB" id="FungiDB:MCYG_06199"/>
<dbReference type="eggNOG" id="KOG2195">
    <property type="taxonomic scope" value="Eukaryota"/>
</dbReference>
<dbReference type="HOGENOM" id="CLU_024336_0_2_1"/>
<dbReference type="OMA" id="VRFCFWT"/>
<dbReference type="OrthoDB" id="2214at2759"/>
<dbReference type="Proteomes" id="UP000002035">
    <property type="component" value="Unassembled WGS sequence"/>
</dbReference>
<dbReference type="GO" id="GO:0005576">
    <property type="term" value="C:extracellular region"/>
    <property type="evidence" value="ECO:0007669"/>
    <property type="project" value="UniProtKB-SubCell"/>
</dbReference>
<dbReference type="GO" id="GO:0004177">
    <property type="term" value="F:aminopeptidase activity"/>
    <property type="evidence" value="ECO:0007669"/>
    <property type="project" value="UniProtKB-KW"/>
</dbReference>
<dbReference type="GO" id="GO:0046872">
    <property type="term" value="F:metal ion binding"/>
    <property type="evidence" value="ECO:0007669"/>
    <property type="project" value="UniProtKB-KW"/>
</dbReference>
<dbReference type="GO" id="GO:0008235">
    <property type="term" value="F:metalloexopeptidase activity"/>
    <property type="evidence" value="ECO:0007669"/>
    <property type="project" value="InterPro"/>
</dbReference>
<dbReference type="GO" id="GO:0006508">
    <property type="term" value="P:proteolysis"/>
    <property type="evidence" value="ECO:0007669"/>
    <property type="project" value="UniProtKB-KW"/>
</dbReference>
<dbReference type="CDD" id="cd03876">
    <property type="entry name" value="M28_SGAP_like"/>
    <property type="match status" value="1"/>
</dbReference>
<dbReference type="CDD" id="cd02130">
    <property type="entry name" value="PA_ScAPY_like"/>
    <property type="match status" value="1"/>
</dbReference>
<dbReference type="FunFam" id="3.40.630.10:FF:000054">
    <property type="entry name" value="Peptide hydrolase"/>
    <property type="match status" value="1"/>
</dbReference>
<dbReference type="Gene3D" id="3.50.30.30">
    <property type="match status" value="1"/>
</dbReference>
<dbReference type="Gene3D" id="3.40.630.10">
    <property type="entry name" value="Zn peptidases"/>
    <property type="match status" value="1"/>
</dbReference>
<dbReference type="InterPro" id="IPR045175">
    <property type="entry name" value="M28_fam"/>
</dbReference>
<dbReference type="InterPro" id="IPR041756">
    <property type="entry name" value="M28_SGAP-like"/>
</dbReference>
<dbReference type="InterPro" id="IPR046450">
    <property type="entry name" value="PA_dom_sf"/>
</dbReference>
<dbReference type="InterPro" id="IPR003137">
    <property type="entry name" value="PA_domain"/>
</dbReference>
<dbReference type="InterPro" id="IPR007484">
    <property type="entry name" value="Peptidase_M28"/>
</dbReference>
<dbReference type="PANTHER" id="PTHR12147">
    <property type="entry name" value="METALLOPEPTIDASE M28 FAMILY MEMBER"/>
    <property type="match status" value="1"/>
</dbReference>
<dbReference type="PANTHER" id="PTHR12147:SF57">
    <property type="entry name" value="PEPTIDE HYDROLASE"/>
    <property type="match status" value="1"/>
</dbReference>
<dbReference type="Pfam" id="PF02225">
    <property type="entry name" value="PA"/>
    <property type="match status" value="1"/>
</dbReference>
<dbReference type="Pfam" id="PF04389">
    <property type="entry name" value="Peptidase_M28"/>
    <property type="match status" value="1"/>
</dbReference>
<dbReference type="SUPFAM" id="SSF52025">
    <property type="entry name" value="PA domain"/>
    <property type="match status" value="1"/>
</dbReference>
<dbReference type="SUPFAM" id="SSF53187">
    <property type="entry name" value="Zn-dependent exopeptidases"/>
    <property type="match status" value="1"/>
</dbReference>
<sequence>MKTQLLSLGVALTAISQGVIAEDALNWPFKPLVNADDLQNKIKLKDLMAGVQKLQDFAYAHPEKNRVFGGAGHKDTVDWIYNELKATGYYDVKMQPQVHLWSHAEAAVNANGKDLTASAMSYSPPADKITAELVLAKNMGCNATDYPEGTKGKIVLIERGVCSFGEKSAQAGDAKAIGAIVYNNVPGSLAGTLGGLDNRHAPTAGISQADGKNLASLVASGKVTVTMNVISKFENRTTWNVIAETKGGDHNNVIMLGSHSDSVDAGPGINDNGSGTIGIMTVAKALTNFKVNNAVRFGWWTAEEFGLLGSTFYVDSLDDRELHKVKLYLNFDMIGSPNFANQIYDGDGSAYNMTGPAGSAEIEYLFEKFFDDQGIPHQPTAFTGRSDYSAFIKRNVPAGGLFTGAEVVKTAEQAKLFGGEAGVAYDKNYHGKGDTVDNINKGAIYLNTRGIAYATAQYASSLRGFPTRPKTGKRDVSPRGQSMPGGGCGHHSVFM</sequence>
<protein>
    <recommendedName>
        <fullName>Leucine aminopeptidase 2</fullName>
        <ecNumber>3.4.11.-</ecNumber>
    </recommendedName>
    <alternativeName>
        <fullName>Leucyl aminopeptidase 2</fullName>
        <shortName>LAP2</shortName>
    </alternativeName>
</protein>
<reference key="1">
    <citation type="journal article" date="2012" name="MBio">
        <title>Comparative genome analysis of Trichophyton rubrum and related dermatophytes reveals candidate genes involved in infection.</title>
        <authorList>
            <person name="Martinez D.A."/>
            <person name="Oliver B.G."/>
            <person name="Graeser Y."/>
            <person name="Goldberg J.M."/>
            <person name="Li W."/>
            <person name="Martinez-Rossi N.M."/>
            <person name="Monod M."/>
            <person name="Shelest E."/>
            <person name="Barton R.C."/>
            <person name="Birch E."/>
            <person name="Brakhage A.A."/>
            <person name="Chen Z."/>
            <person name="Gurr S.J."/>
            <person name="Heiman D."/>
            <person name="Heitman J."/>
            <person name="Kosti I."/>
            <person name="Rossi A."/>
            <person name="Saif S."/>
            <person name="Samalova M."/>
            <person name="Saunders C.W."/>
            <person name="Shea T."/>
            <person name="Summerbell R.C."/>
            <person name="Xu J."/>
            <person name="Young S."/>
            <person name="Zeng Q."/>
            <person name="Birren B.W."/>
            <person name="Cuomo C.A."/>
            <person name="White T.C."/>
        </authorList>
    </citation>
    <scope>NUCLEOTIDE SEQUENCE [LARGE SCALE GENOMIC DNA]</scope>
    <source>
        <strain>ATCC MYA-4605 / CBS 113480</strain>
    </source>
</reference>
<name>LAP2_ARTOC</name>
<keyword id="KW-0031">Aminopeptidase</keyword>
<keyword id="KW-0325">Glycoprotein</keyword>
<keyword id="KW-0378">Hydrolase</keyword>
<keyword id="KW-0479">Metal-binding</keyword>
<keyword id="KW-0482">Metalloprotease</keyword>
<keyword id="KW-0645">Protease</keyword>
<keyword id="KW-1185">Reference proteome</keyword>
<keyword id="KW-0964">Secreted</keyword>
<keyword id="KW-0732">Signal</keyword>
<keyword id="KW-0843">Virulence</keyword>
<keyword id="KW-0862">Zinc</keyword>
<feature type="signal peptide" evidence="3">
    <location>
        <begin position="1"/>
        <end position="21"/>
    </location>
</feature>
<feature type="chain" id="PRO_0000384094" description="Leucine aminopeptidase 2">
    <location>
        <begin position="22"/>
        <end position="495"/>
    </location>
</feature>
<feature type="domain" description="PA">
    <location>
        <begin position="124"/>
        <end position="218"/>
    </location>
</feature>
<feature type="region of interest" description="Disordered" evidence="4">
    <location>
        <begin position="464"/>
        <end position="495"/>
    </location>
</feature>
<feature type="active site" description="Proton acceptor" evidence="2">
    <location>
        <position position="303"/>
    </location>
</feature>
<feature type="binding site" evidence="2">
    <location>
        <position position="259"/>
    </location>
    <ligand>
        <name>Zn(2+)</name>
        <dbReference type="ChEBI" id="CHEBI:29105"/>
        <label>1</label>
        <note>catalytic</note>
    </ligand>
</feature>
<feature type="binding site" evidence="2">
    <location>
        <position position="271"/>
    </location>
    <ligand>
        <name>Zn(2+)</name>
        <dbReference type="ChEBI" id="CHEBI:29105"/>
        <label>1</label>
        <note>catalytic</note>
    </ligand>
</feature>
<feature type="binding site" evidence="2">
    <location>
        <position position="271"/>
    </location>
    <ligand>
        <name>Zn(2+)</name>
        <dbReference type="ChEBI" id="CHEBI:29105"/>
        <label>2</label>
        <note>catalytic</note>
    </ligand>
</feature>
<feature type="binding site" evidence="2">
    <location>
        <position position="304"/>
    </location>
    <ligand>
        <name>Zn(2+)</name>
        <dbReference type="ChEBI" id="CHEBI:29105"/>
        <label>2</label>
        <note>catalytic</note>
    </ligand>
</feature>
<feature type="binding site" evidence="2">
    <location>
        <position position="332"/>
    </location>
    <ligand>
        <name>Zn(2+)</name>
        <dbReference type="ChEBI" id="CHEBI:29105"/>
        <label>1</label>
        <note>catalytic</note>
    </ligand>
</feature>
<feature type="binding site" evidence="2">
    <location>
        <position position="430"/>
    </location>
    <ligand>
        <name>Zn(2+)</name>
        <dbReference type="ChEBI" id="CHEBI:29105"/>
        <label>2</label>
        <note>catalytic</note>
    </ligand>
</feature>
<feature type="site" description="Transition state stabilizer" evidence="2">
    <location>
        <position position="429"/>
    </location>
</feature>
<feature type="glycosylation site" description="N-linked (GlcNAc...) asparagine" evidence="3">
    <location>
        <position position="142"/>
    </location>
</feature>
<feature type="glycosylation site" description="N-linked (GlcNAc...) asparagine" evidence="3">
    <location>
        <position position="235"/>
    </location>
</feature>
<feature type="glycosylation site" description="N-linked (GlcNAc...) asparagine" evidence="3">
    <location>
        <position position="272"/>
    </location>
</feature>
<feature type="glycosylation site" description="N-linked (GlcNAc...) asparagine" evidence="3">
    <location>
        <position position="352"/>
    </location>
</feature>